<proteinExistence type="inferred from homology"/>
<name>RNH2_STRA1</name>
<comment type="function">
    <text evidence="1">Endonuclease that specifically degrades the RNA of RNA-DNA hybrids.</text>
</comment>
<comment type="catalytic activity">
    <reaction evidence="1">
        <text>Endonucleolytic cleavage to 5'-phosphomonoester.</text>
        <dbReference type="EC" id="3.1.26.4"/>
    </reaction>
</comment>
<comment type="cofactor">
    <cofactor evidence="1">
        <name>Mn(2+)</name>
        <dbReference type="ChEBI" id="CHEBI:29035"/>
    </cofactor>
    <cofactor evidence="1">
        <name>Mg(2+)</name>
        <dbReference type="ChEBI" id="CHEBI:18420"/>
    </cofactor>
    <text evidence="1">Manganese or magnesium. Binds 1 divalent metal ion per monomer in the absence of substrate. May bind a second metal ion after substrate binding.</text>
</comment>
<comment type="subcellular location">
    <subcellularLocation>
        <location evidence="1">Cytoplasm</location>
    </subcellularLocation>
</comment>
<comment type="similarity">
    <text evidence="1">Belongs to the RNase HII family.</text>
</comment>
<keyword id="KW-0963">Cytoplasm</keyword>
<keyword id="KW-0255">Endonuclease</keyword>
<keyword id="KW-0378">Hydrolase</keyword>
<keyword id="KW-0464">Manganese</keyword>
<keyword id="KW-0479">Metal-binding</keyword>
<keyword id="KW-0540">Nuclease</keyword>
<gene>
    <name evidence="1" type="primary">rnhB</name>
    <name type="ordered locus">SAK_1107</name>
</gene>
<dbReference type="EC" id="3.1.26.4" evidence="1"/>
<dbReference type="EMBL" id="CP000114">
    <property type="protein sequence ID" value="ABA44919.1"/>
    <property type="molecule type" value="Genomic_DNA"/>
</dbReference>
<dbReference type="RefSeq" id="WP_000201090.1">
    <property type="nucleotide sequence ID" value="NC_007432.1"/>
</dbReference>
<dbReference type="SMR" id="Q3K175"/>
<dbReference type="KEGG" id="sak:SAK_1107"/>
<dbReference type="HOGENOM" id="CLU_036532_2_1_9"/>
<dbReference type="GO" id="GO:0005737">
    <property type="term" value="C:cytoplasm"/>
    <property type="evidence" value="ECO:0007669"/>
    <property type="project" value="UniProtKB-SubCell"/>
</dbReference>
<dbReference type="GO" id="GO:0032299">
    <property type="term" value="C:ribonuclease H2 complex"/>
    <property type="evidence" value="ECO:0007669"/>
    <property type="project" value="TreeGrafter"/>
</dbReference>
<dbReference type="GO" id="GO:0030145">
    <property type="term" value="F:manganese ion binding"/>
    <property type="evidence" value="ECO:0007669"/>
    <property type="project" value="UniProtKB-UniRule"/>
</dbReference>
<dbReference type="GO" id="GO:0003723">
    <property type="term" value="F:RNA binding"/>
    <property type="evidence" value="ECO:0007669"/>
    <property type="project" value="InterPro"/>
</dbReference>
<dbReference type="GO" id="GO:0004523">
    <property type="term" value="F:RNA-DNA hybrid ribonuclease activity"/>
    <property type="evidence" value="ECO:0007669"/>
    <property type="project" value="UniProtKB-UniRule"/>
</dbReference>
<dbReference type="GO" id="GO:0043137">
    <property type="term" value="P:DNA replication, removal of RNA primer"/>
    <property type="evidence" value="ECO:0007669"/>
    <property type="project" value="TreeGrafter"/>
</dbReference>
<dbReference type="GO" id="GO:0006298">
    <property type="term" value="P:mismatch repair"/>
    <property type="evidence" value="ECO:0007669"/>
    <property type="project" value="TreeGrafter"/>
</dbReference>
<dbReference type="CDD" id="cd07182">
    <property type="entry name" value="RNase_HII_bacteria_HII_like"/>
    <property type="match status" value="1"/>
</dbReference>
<dbReference type="FunFam" id="3.30.420.10:FF:000006">
    <property type="entry name" value="Ribonuclease HII"/>
    <property type="match status" value="1"/>
</dbReference>
<dbReference type="Gene3D" id="3.30.420.10">
    <property type="entry name" value="Ribonuclease H-like superfamily/Ribonuclease H"/>
    <property type="match status" value="1"/>
</dbReference>
<dbReference type="HAMAP" id="MF_00052_B">
    <property type="entry name" value="RNase_HII_B"/>
    <property type="match status" value="1"/>
</dbReference>
<dbReference type="InterPro" id="IPR022898">
    <property type="entry name" value="RNase_HII"/>
</dbReference>
<dbReference type="InterPro" id="IPR001352">
    <property type="entry name" value="RNase_HII/HIII"/>
</dbReference>
<dbReference type="InterPro" id="IPR024567">
    <property type="entry name" value="RNase_HII/HIII_dom"/>
</dbReference>
<dbReference type="InterPro" id="IPR012337">
    <property type="entry name" value="RNaseH-like_sf"/>
</dbReference>
<dbReference type="InterPro" id="IPR036397">
    <property type="entry name" value="RNaseH_sf"/>
</dbReference>
<dbReference type="NCBIfam" id="NF000594">
    <property type="entry name" value="PRK00015.1-1"/>
    <property type="match status" value="1"/>
</dbReference>
<dbReference type="NCBIfam" id="NF000595">
    <property type="entry name" value="PRK00015.1-3"/>
    <property type="match status" value="1"/>
</dbReference>
<dbReference type="PANTHER" id="PTHR10954">
    <property type="entry name" value="RIBONUCLEASE H2 SUBUNIT A"/>
    <property type="match status" value="1"/>
</dbReference>
<dbReference type="PANTHER" id="PTHR10954:SF18">
    <property type="entry name" value="RIBONUCLEASE HII"/>
    <property type="match status" value="1"/>
</dbReference>
<dbReference type="Pfam" id="PF01351">
    <property type="entry name" value="RNase_HII"/>
    <property type="match status" value="1"/>
</dbReference>
<dbReference type="SUPFAM" id="SSF53098">
    <property type="entry name" value="Ribonuclease H-like"/>
    <property type="match status" value="1"/>
</dbReference>
<dbReference type="PROSITE" id="PS51975">
    <property type="entry name" value="RNASE_H_2"/>
    <property type="match status" value="1"/>
</dbReference>
<organism>
    <name type="scientific">Streptococcus agalactiae serotype Ia (strain ATCC 27591 / A909 / CDC SS700)</name>
    <dbReference type="NCBI Taxonomy" id="205921"/>
    <lineage>
        <taxon>Bacteria</taxon>
        <taxon>Bacillati</taxon>
        <taxon>Bacillota</taxon>
        <taxon>Bacilli</taxon>
        <taxon>Lactobacillales</taxon>
        <taxon>Streptococcaceae</taxon>
        <taxon>Streptococcus</taxon>
    </lineage>
</organism>
<reference key="1">
    <citation type="journal article" date="2005" name="Proc. Natl. Acad. Sci. U.S.A.">
        <title>Genome analysis of multiple pathogenic isolates of Streptococcus agalactiae: implications for the microbial 'pan-genome'.</title>
        <authorList>
            <person name="Tettelin H."/>
            <person name="Masignani V."/>
            <person name="Cieslewicz M.J."/>
            <person name="Donati C."/>
            <person name="Medini D."/>
            <person name="Ward N.L."/>
            <person name="Angiuoli S.V."/>
            <person name="Crabtree J."/>
            <person name="Jones A.L."/>
            <person name="Durkin A.S."/>
            <person name="DeBoy R.T."/>
            <person name="Davidsen T.M."/>
            <person name="Mora M."/>
            <person name="Scarselli M."/>
            <person name="Margarit y Ros I."/>
            <person name="Peterson J.D."/>
            <person name="Hauser C.R."/>
            <person name="Sundaram J.P."/>
            <person name="Nelson W.C."/>
            <person name="Madupu R."/>
            <person name="Brinkac L.M."/>
            <person name="Dodson R.J."/>
            <person name="Rosovitz M.J."/>
            <person name="Sullivan S.A."/>
            <person name="Daugherty S.C."/>
            <person name="Haft D.H."/>
            <person name="Selengut J."/>
            <person name="Gwinn M.L."/>
            <person name="Zhou L."/>
            <person name="Zafar N."/>
            <person name="Khouri H."/>
            <person name="Radune D."/>
            <person name="Dimitrov G."/>
            <person name="Watkins K."/>
            <person name="O'Connor K.J."/>
            <person name="Smith S."/>
            <person name="Utterback T.R."/>
            <person name="White O."/>
            <person name="Rubens C.E."/>
            <person name="Grandi G."/>
            <person name="Madoff L.C."/>
            <person name="Kasper D.L."/>
            <person name="Telford J.L."/>
            <person name="Wessels M.R."/>
            <person name="Rappuoli R."/>
            <person name="Fraser C.M."/>
        </authorList>
    </citation>
    <scope>NUCLEOTIDE SEQUENCE [LARGE SCALE GENOMIC DNA]</scope>
    <source>
        <strain>ATCC 27591 / A909 / CDC SS700</strain>
    </source>
</reference>
<protein>
    <recommendedName>
        <fullName evidence="1">Ribonuclease HII</fullName>
        <shortName evidence="1">RNase HII</shortName>
        <ecNumber evidence="1">3.1.26.4</ecNumber>
    </recommendedName>
</protein>
<sequence>MATIKEIKAILETIVDLKDKRWQEYQTDSRAGVQKAILQRKKNIQSDLDEEARLEQMLVYEKKLYIEHINLIAGIDEVGRGPLAGPVVAAAVILPPNCKIKHLNDSKKIPKKKHQEIYQNILDQALAVGIGIQDSQCIDDINIYEATKHAMIDAVSHLSVVPEHLLIDAMVLDLPIPQTKIIKGDANSLSIAAASIVAKVTRDKIMSDYDSKYPGYAFSKNAGYGTKEHLEGLQKYGITPIHRKSFEPIKSML</sequence>
<feature type="chain" id="PRO_0000235772" description="Ribonuclease HII">
    <location>
        <begin position="1"/>
        <end position="253"/>
    </location>
</feature>
<feature type="domain" description="RNase H type-2" evidence="2">
    <location>
        <begin position="70"/>
        <end position="253"/>
    </location>
</feature>
<feature type="binding site" evidence="1">
    <location>
        <position position="76"/>
    </location>
    <ligand>
        <name>a divalent metal cation</name>
        <dbReference type="ChEBI" id="CHEBI:60240"/>
    </ligand>
</feature>
<feature type="binding site" evidence="1">
    <location>
        <position position="77"/>
    </location>
    <ligand>
        <name>a divalent metal cation</name>
        <dbReference type="ChEBI" id="CHEBI:60240"/>
    </ligand>
</feature>
<feature type="binding site" evidence="1">
    <location>
        <position position="168"/>
    </location>
    <ligand>
        <name>a divalent metal cation</name>
        <dbReference type="ChEBI" id="CHEBI:60240"/>
    </ligand>
</feature>
<accession>Q3K175</accession>
<evidence type="ECO:0000255" key="1">
    <source>
        <dbReference type="HAMAP-Rule" id="MF_00052"/>
    </source>
</evidence>
<evidence type="ECO:0000255" key="2">
    <source>
        <dbReference type="PROSITE-ProRule" id="PRU01319"/>
    </source>
</evidence>